<gene>
    <name type="ordered locus">NGR_a02150</name>
    <name type="ORF">y4oU</name>
</gene>
<reference key="1">
    <citation type="journal article" date="1997" name="Nature">
        <title>Molecular basis of symbiosis between Rhizobium and legumes.</title>
        <authorList>
            <person name="Freiberg C.A."/>
            <person name="Fellay R."/>
            <person name="Bairoch A."/>
            <person name="Broughton W.J."/>
            <person name="Rosenthal A."/>
            <person name="Perret X."/>
        </authorList>
    </citation>
    <scope>NUCLEOTIDE SEQUENCE [LARGE SCALE GENOMIC DNA]</scope>
    <source>
        <strain>NBRC 101917 / NGR234</strain>
    </source>
</reference>
<reference key="2">
    <citation type="journal article" date="2009" name="Appl. Environ. Microbiol.">
        <title>Rhizobium sp. strain NGR234 possesses a remarkable number of secretion systems.</title>
        <authorList>
            <person name="Schmeisser C."/>
            <person name="Liesegang H."/>
            <person name="Krysciak D."/>
            <person name="Bakkou N."/>
            <person name="Le Quere A."/>
            <person name="Wollherr A."/>
            <person name="Heinemeyer I."/>
            <person name="Morgenstern B."/>
            <person name="Pommerening-Roeser A."/>
            <person name="Flores M."/>
            <person name="Palacios R."/>
            <person name="Brenner S."/>
            <person name="Gottschalk G."/>
            <person name="Schmitz R.A."/>
            <person name="Broughton W.J."/>
            <person name="Perret X."/>
            <person name="Strittmatter A.W."/>
            <person name="Streit W.R."/>
        </authorList>
    </citation>
    <scope>NUCLEOTIDE SEQUENCE [LARGE SCALE GENOMIC DNA]</scope>
    <source>
        <strain>NBRC 101917 / NGR234</strain>
    </source>
</reference>
<feature type="chain" id="PRO_0000220215" description="UPF0261 protein y4oU">
    <location>
        <begin position="1"/>
        <end position="402"/>
    </location>
</feature>
<accession>P55606</accession>
<geneLocation type="plasmid">
    <name>sym pNGR234a</name>
</geneLocation>
<sequence length="402" mass="43097">MNTVYVVGTCDTKGGELRYLRDLIRQAGCDAVLVDVSVSEFHSQAADVDVQPSEVARFHPNPPKPEDLKDRGKAVAAMAQALVEFIRSRPDVDGIIGAGGTGGTALIAPALRALPIGTPKVLVSTVASGNVAPYVGPTDISMMYSVTDVSGLNRISRVVLANAAHSVAGMVLNKVSAAKDERPAIGLTMFGVTTPCVQAVTRALEADFDCLVFHATGTGGQSFEKLADSALLVGGIDVSTTEVCDYLVGGVFPCTADRFGAFARTRLPYVGSCGALDMVNFGAMDTVPSRFRSRRLHVHNPQVTLMRTTPEECNRIGEWIAERLNLCEGTVRFLIPELGVSAIDAPGQPFHDPEADSALFAALERTLRRTTKRQLIRVPLHINDPQFAELLVTNFKEALREH</sequence>
<proteinExistence type="inferred from homology"/>
<comment type="similarity">
    <text evidence="1">Belongs to the UPF0261 family.</text>
</comment>
<organism>
    <name type="scientific">Sinorhizobium fredii (strain NBRC 101917 / NGR234)</name>
    <dbReference type="NCBI Taxonomy" id="394"/>
    <lineage>
        <taxon>Bacteria</taxon>
        <taxon>Pseudomonadati</taxon>
        <taxon>Pseudomonadota</taxon>
        <taxon>Alphaproteobacteria</taxon>
        <taxon>Hyphomicrobiales</taxon>
        <taxon>Rhizobiaceae</taxon>
        <taxon>Sinorhizobium/Ensifer group</taxon>
        <taxon>Sinorhizobium</taxon>
    </lineage>
</organism>
<protein>
    <recommendedName>
        <fullName evidence="1">UPF0261 protein y4oU</fullName>
    </recommendedName>
</protein>
<keyword id="KW-0614">Plasmid</keyword>
<keyword id="KW-1185">Reference proteome</keyword>
<dbReference type="EMBL" id="U00090">
    <property type="protein sequence ID" value="AAB91807.1"/>
    <property type="molecule type" value="Genomic_DNA"/>
</dbReference>
<dbReference type="RefSeq" id="NP_444010.1">
    <property type="nucleotide sequence ID" value="NC_000914.2"/>
</dbReference>
<dbReference type="RefSeq" id="WP_010875242.1">
    <property type="nucleotide sequence ID" value="NC_000914.2"/>
</dbReference>
<dbReference type="SMR" id="P55606"/>
<dbReference type="KEGG" id="rhi:NGR_a02150"/>
<dbReference type="PATRIC" id="fig|394.7.peg.226"/>
<dbReference type="eggNOG" id="COG5441">
    <property type="taxonomic scope" value="Bacteria"/>
</dbReference>
<dbReference type="HOGENOM" id="CLU_036813_1_0_5"/>
<dbReference type="OrthoDB" id="9776369at2"/>
<dbReference type="Proteomes" id="UP000001054">
    <property type="component" value="Plasmid pNGR234a"/>
</dbReference>
<dbReference type="CDD" id="cd15488">
    <property type="entry name" value="Tm-1-like"/>
    <property type="match status" value="1"/>
</dbReference>
<dbReference type="Gene3D" id="3.40.50.12030">
    <property type="entry name" value="Uncharacterised protein family UPF0261, NC domain"/>
    <property type="match status" value="1"/>
</dbReference>
<dbReference type="Gene3D" id="3.40.50.12020">
    <property type="entry name" value="Uncharacterised protein family UPF0261, NN domain"/>
    <property type="match status" value="1"/>
</dbReference>
<dbReference type="HAMAP" id="MF_00677">
    <property type="entry name" value="UPF0261"/>
    <property type="match status" value="1"/>
</dbReference>
<dbReference type="InterPro" id="IPR051353">
    <property type="entry name" value="Tobamovirus_resist_UPF0261"/>
</dbReference>
<dbReference type="InterPro" id="IPR008322">
    <property type="entry name" value="UPF0261"/>
</dbReference>
<dbReference type="InterPro" id="IPR056778">
    <property type="entry name" value="UPF0261_C"/>
</dbReference>
<dbReference type="InterPro" id="IPR044122">
    <property type="entry name" value="UPF0261_N"/>
</dbReference>
<dbReference type="NCBIfam" id="NF002673">
    <property type="entry name" value="PRK02399.1-1"/>
    <property type="match status" value="1"/>
</dbReference>
<dbReference type="NCBIfam" id="NF002674">
    <property type="entry name" value="PRK02399.1-2"/>
    <property type="match status" value="1"/>
</dbReference>
<dbReference type="PANTHER" id="PTHR31862">
    <property type="entry name" value="UPF0261 DOMAIN PROTEIN (AFU_ORTHOLOGUE AFUA_1G10120)"/>
    <property type="match status" value="1"/>
</dbReference>
<dbReference type="PANTHER" id="PTHR31862:SF1">
    <property type="entry name" value="UPF0261 DOMAIN PROTEIN (AFU_ORTHOLOGUE AFUA_1G10120)"/>
    <property type="match status" value="1"/>
</dbReference>
<dbReference type="Pfam" id="PF06792">
    <property type="entry name" value="UPF0261"/>
    <property type="match status" value="1"/>
</dbReference>
<dbReference type="Pfam" id="PF23189">
    <property type="entry name" value="UPF0261_C"/>
    <property type="match status" value="1"/>
</dbReference>
<dbReference type="PIRSF" id="PIRSF033271">
    <property type="entry name" value="UCP033271"/>
    <property type="match status" value="1"/>
</dbReference>
<evidence type="ECO:0000255" key="1">
    <source>
        <dbReference type="HAMAP-Rule" id="MF_00677"/>
    </source>
</evidence>
<name>Y4OU_SINFN</name>